<sequence length="282" mass="32645">MSSYENHQALDGLTLGKSTDYRDNYDASLLQGVPRSLNRDPLGLTADNLPFHGADIWTLYELSWLNSQGLPQVAVGHVELDYTSVNLIESKSFKLYLNSFNQTRFDTWETVRQTLERDLRACAQGNVSVRLHRLDELEGQPVAHFHGTCIDDQDISIDNYQFTTDYLQHAVSGEKQVEETLVSHLLKSNCLITHQPDWGSIQIQYRGRKIDREKLLRYLVSFRHHNEFHEQCVERIFNDILRFCQPETLSVYARYTRRGGLDINPWRSNTDFVPATGRLARQ</sequence>
<name>QUEF_SALA4</name>
<organism>
    <name type="scientific">Salmonella agona (strain SL483)</name>
    <dbReference type="NCBI Taxonomy" id="454166"/>
    <lineage>
        <taxon>Bacteria</taxon>
        <taxon>Pseudomonadati</taxon>
        <taxon>Pseudomonadota</taxon>
        <taxon>Gammaproteobacteria</taxon>
        <taxon>Enterobacterales</taxon>
        <taxon>Enterobacteriaceae</taxon>
        <taxon>Salmonella</taxon>
    </lineage>
</organism>
<feature type="chain" id="PRO_1000213075" description="NADPH-dependent 7-cyano-7-deazaguanine reductase">
    <location>
        <begin position="1"/>
        <end position="282"/>
    </location>
</feature>
<feature type="active site" description="Thioimide intermediate" evidence="1">
    <location>
        <position position="190"/>
    </location>
</feature>
<feature type="active site" description="Proton donor" evidence="1">
    <location>
        <position position="197"/>
    </location>
</feature>
<feature type="binding site" evidence="1">
    <location>
        <begin position="88"/>
        <end position="90"/>
    </location>
    <ligand>
        <name>substrate</name>
    </ligand>
</feature>
<feature type="binding site" evidence="1">
    <location>
        <begin position="90"/>
        <end position="91"/>
    </location>
    <ligand>
        <name>NADPH</name>
        <dbReference type="ChEBI" id="CHEBI:57783"/>
    </ligand>
</feature>
<feature type="binding site" evidence="1">
    <location>
        <begin position="229"/>
        <end position="230"/>
    </location>
    <ligand>
        <name>substrate</name>
    </ligand>
</feature>
<feature type="binding site" evidence="1">
    <location>
        <begin position="258"/>
        <end position="259"/>
    </location>
    <ligand>
        <name>NADPH</name>
        <dbReference type="ChEBI" id="CHEBI:57783"/>
    </ligand>
</feature>
<keyword id="KW-0963">Cytoplasm</keyword>
<keyword id="KW-0521">NADP</keyword>
<keyword id="KW-0560">Oxidoreductase</keyword>
<keyword id="KW-0671">Queuosine biosynthesis</keyword>
<gene>
    <name evidence="1" type="primary">queF</name>
    <name type="ordered locus">SeAg_B3110</name>
</gene>
<accession>B5F4R2</accession>
<proteinExistence type="inferred from homology"/>
<reference key="1">
    <citation type="journal article" date="2011" name="J. Bacteriol.">
        <title>Comparative genomics of 28 Salmonella enterica isolates: evidence for CRISPR-mediated adaptive sublineage evolution.</title>
        <authorList>
            <person name="Fricke W.F."/>
            <person name="Mammel M.K."/>
            <person name="McDermott P.F."/>
            <person name="Tartera C."/>
            <person name="White D.G."/>
            <person name="Leclerc J.E."/>
            <person name="Ravel J."/>
            <person name="Cebula T.A."/>
        </authorList>
    </citation>
    <scope>NUCLEOTIDE SEQUENCE [LARGE SCALE GENOMIC DNA]</scope>
    <source>
        <strain>SL483</strain>
    </source>
</reference>
<comment type="function">
    <text evidence="1">Catalyzes the NADPH-dependent reduction of 7-cyano-7-deazaguanine (preQ0) to 7-aminomethyl-7-deazaguanine (preQ1).</text>
</comment>
<comment type="catalytic activity">
    <reaction evidence="1">
        <text>7-aminomethyl-7-carbaguanine + 2 NADP(+) = 7-cyano-7-deazaguanine + 2 NADPH + 3 H(+)</text>
        <dbReference type="Rhea" id="RHEA:13409"/>
        <dbReference type="ChEBI" id="CHEBI:15378"/>
        <dbReference type="ChEBI" id="CHEBI:45075"/>
        <dbReference type="ChEBI" id="CHEBI:57783"/>
        <dbReference type="ChEBI" id="CHEBI:58349"/>
        <dbReference type="ChEBI" id="CHEBI:58703"/>
        <dbReference type="EC" id="1.7.1.13"/>
    </reaction>
</comment>
<comment type="pathway">
    <text evidence="1">tRNA modification; tRNA-queuosine biosynthesis.</text>
</comment>
<comment type="subunit">
    <text evidence="1">Homodimer.</text>
</comment>
<comment type="subcellular location">
    <subcellularLocation>
        <location evidence="1">Cytoplasm</location>
    </subcellularLocation>
</comment>
<comment type="similarity">
    <text evidence="1">Belongs to the GTP cyclohydrolase I family. QueF type 2 subfamily.</text>
</comment>
<protein>
    <recommendedName>
        <fullName evidence="1">NADPH-dependent 7-cyano-7-deazaguanine reductase</fullName>
        <ecNumber evidence="1">1.7.1.13</ecNumber>
    </recommendedName>
    <alternativeName>
        <fullName evidence="1">7-cyano-7-carbaguanine reductase</fullName>
    </alternativeName>
    <alternativeName>
        <fullName evidence="1">NADPH-dependent nitrile oxidoreductase</fullName>
    </alternativeName>
    <alternativeName>
        <fullName evidence="1">PreQ(0) reductase</fullName>
    </alternativeName>
</protein>
<dbReference type="EC" id="1.7.1.13" evidence="1"/>
<dbReference type="EMBL" id="CP001138">
    <property type="protein sequence ID" value="ACH48622.1"/>
    <property type="molecule type" value="Genomic_DNA"/>
</dbReference>
<dbReference type="RefSeq" id="WP_000100463.1">
    <property type="nucleotide sequence ID" value="NC_011149.1"/>
</dbReference>
<dbReference type="SMR" id="B5F4R2"/>
<dbReference type="KEGG" id="sea:SeAg_B3110"/>
<dbReference type="HOGENOM" id="CLU_054738_0_0_6"/>
<dbReference type="UniPathway" id="UPA00392"/>
<dbReference type="Proteomes" id="UP000008819">
    <property type="component" value="Chromosome"/>
</dbReference>
<dbReference type="GO" id="GO:0005737">
    <property type="term" value="C:cytoplasm"/>
    <property type="evidence" value="ECO:0007669"/>
    <property type="project" value="UniProtKB-SubCell"/>
</dbReference>
<dbReference type="GO" id="GO:0033739">
    <property type="term" value="F:preQ1 synthase activity"/>
    <property type="evidence" value="ECO:0007669"/>
    <property type="project" value="UniProtKB-UniRule"/>
</dbReference>
<dbReference type="GO" id="GO:0008616">
    <property type="term" value="P:queuosine biosynthetic process"/>
    <property type="evidence" value="ECO:0007669"/>
    <property type="project" value="UniProtKB-UniRule"/>
</dbReference>
<dbReference type="GO" id="GO:0006400">
    <property type="term" value="P:tRNA modification"/>
    <property type="evidence" value="ECO:0007669"/>
    <property type="project" value="UniProtKB-UniRule"/>
</dbReference>
<dbReference type="FunFam" id="3.30.1130.10:FF:000004">
    <property type="entry name" value="NADPH-dependent 7-cyano-7-deazaguanine reductase"/>
    <property type="match status" value="1"/>
</dbReference>
<dbReference type="Gene3D" id="3.30.1130.10">
    <property type="match status" value="2"/>
</dbReference>
<dbReference type="HAMAP" id="MF_00817">
    <property type="entry name" value="QueF_type2"/>
    <property type="match status" value="1"/>
</dbReference>
<dbReference type="InterPro" id="IPR043133">
    <property type="entry name" value="GTP-CH-I_C/QueF"/>
</dbReference>
<dbReference type="InterPro" id="IPR050084">
    <property type="entry name" value="NADPH_dep_7-cyano-7-deazaG_red"/>
</dbReference>
<dbReference type="InterPro" id="IPR029500">
    <property type="entry name" value="QueF"/>
</dbReference>
<dbReference type="InterPro" id="IPR029139">
    <property type="entry name" value="QueF_N"/>
</dbReference>
<dbReference type="InterPro" id="IPR016428">
    <property type="entry name" value="QueF_type2"/>
</dbReference>
<dbReference type="NCBIfam" id="TIGR03138">
    <property type="entry name" value="QueF"/>
    <property type="match status" value="1"/>
</dbReference>
<dbReference type="PANTHER" id="PTHR34354">
    <property type="entry name" value="NADPH-DEPENDENT 7-CYANO-7-DEAZAGUANINE REDUCTASE"/>
    <property type="match status" value="1"/>
</dbReference>
<dbReference type="PANTHER" id="PTHR34354:SF1">
    <property type="entry name" value="NADPH-DEPENDENT 7-CYANO-7-DEAZAGUANINE REDUCTASE"/>
    <property type="match status" value="1"/>
</dbReference>
<dbReference type="Pfam" id="PF14489">
    <property type="entry name" value="QueF"/>
    <property type="match status" value="1"/>
</dbReference>
<dbReference type="Pfam" id="PF14819">
    <property type="entry name" value="QueF_N"/>
    <property type="match status" value="1"/>
</dbReference>
<dbReference type="PIRSF" id="PIRSF004750">
    <property type="entry name" value="Nitrile_oxidored_YqcD_prd"/>
    <property type="match status" value="1"/>
</dbReference>
<dbReference type="SUPFAM" id="SSF55620">
    <property type="entry name" value="Tetrahydrobiopterin biosynthesis enzymes-like"/>
    <property type="match status" value="1"/>
</dbReference>
<evidence type="ECO:0000255" key="1">
    <source>
        <dbReference type="HAMAP-Rule" id="MF_00817"/>
    </source>
</evidence>